<accession>B4TZW1</accession>
<feature type="chain" id="PRO_1000148094" description="ADP-L-glycero-D-manno-heptose-6-epimerase">
    <location>
        <begin position="1"/>
        <end position="310"/>
    </location>
</feature>
<feature type="active site" description="Proton acceptor" evidence="1">
    <location>
        <position position="140"/>
    </location>
</feature>
<feature type="active site" description="Proton acceptor" evidence="1">
    <location>
        <position position="178"/>
    </location>
</feature>
<feature type="binding site" evidence="1">
    <location>
        <begin position="10"/>
        <end position="11"/>
    </location>
    <ligand>
        <name>NADP(+)</name>
        <dbReference type="ChEBI" id="CHEBI:58349"/>
    </ligand>
</feature>
<feature type="binding site" evidence="1">
    <location>
        <begin position="31"/>
        <end position="32"/>
    </location>
    <ligand>
        <name>NADP(+)</name>
        <dbReference type="ChEBI" id="CHEBI:58349"/>
    </ligand>
</feature>
<feature type="binding site" evidence="1">
    <location>
        <position position="38"/>
    </location>
    <ligand>
        <name>NADP(+)</name>
        <dbReference type="ChEBI" id="CHEBI:58349"/>
    </ligand>
</feature>
<feature type="binding site" evidence="1">
    <location>
        <position position="53"/>
    </location>
    <ligand>
        <name>NADP(+)</name>
        <dbReference type="ChEBI" id="CHEBI:58349"/>
    </ligand>
</feature>
<feature type="binding site" evidence="1">
    <location>
        <begin position="75"/>
        <end position="79"/>
    </location>
    <ligand>
        <name>NADP(+)</name>
        <dbReference type="ChEBI" id="CHEBI:58349"/>
    </ligand>
</feature>
<feature type="binding site" evidence="1">
    <location>
        <position position="92"/>
    </location>
    <ligand>
        <name>NADP(+)</name>
        <dbReference type="ChEBI" id="CHEBI:58349"/>
    </ligand>
</feature>
<feature type="binding site" evidence="1">
    <location>
        <position position="144"/>
    </location>
    <ligand>
        <name>NADP(+)</name>
        <dbReference type="ChEBI" id="CHEBI:58349"/>
    </ligand>
</feature>
<feature type="binding site" evidence="1">
    <location>
        <position position="169"/>
    </location>
    <ligand>
        <name>substrate</name>
    </ligand>
</feature>
<feature type="binding site" evidence="1">
    <location>
        <position position="170"/>
    </location>
    <ligand>
        <name>NADP(+)</name>
        <dbReference type="ChEBI" id="CHEBI:58349"/>
    </ligand>
</feature>
<feature type="binding site" evidence="1">
    <location>
        <position position="178"/>
    </location>
    <ligand>
        <name>NADP(+)</name>
        <dbReference type="ChEBI" id="CHEBI:58349"/>
    </ligand>
</feature>
<feature type="binding site" evidence="1">
    <location>
        <position position="180"/>
    </location>
    <ligand>
        <name>substrate</name>
    </ligand>
</feature>
<feature type="binding site" evidence="1">
    <location>
        <position position="187"/>
    </location>
    <ligand>
        <name>substrate</name>
    </ligand>
</feature>
<feature type="binding site" evidence="1">
    <location>
        <begin position="201"/>
        <end position="204"/>
    </location>
    <ligand>
        <name>substrate</name>
    </ligand>
</feature>
<feature type="binding site" evidence="1">
    <location>
        <position position="209"/>
    </location>
    <ligand>
        <name>substrate</name>
    </ligand>
</feature>
<feature type="binding site" evidence="1">
    <location>
        <position position="272"/>
    </location>
    <ligand>
        <name>substrate</name>
    </ligand>
</feature>
<proteinExistence type="inferred from homology"/>
<protein>
    <recommendedName>
        <fullName evidence="1">ADP-L-glycero-D-manno-heptose-6-epimerase</fullName>
        <ecNumber evidence="1">5.1.3.20</ecNumber>
    </recommendedName>
    <alternativeName>
        <fullName evidence="1">ADP-L-glycero-beta-D-manno-heptose-6-epimerase</fullName>
        <shortName evidence="1">ADP-glyceromanno-heptose 6-epimerase</shortName>
        <shortName evidence="1">ADP-hep 6-epimerase</shortName>
        <shortName evidence="1">AGME</shortName>
    </alternativeName>
</protein>
<name>HLDD_SALSV</name>
<comment type="function">
    <text evidence="1">Catalyzes the interconversion between ADP-D-glycero-beta-D-manno-heptose and ADP-L-glycero-beta-D-manno-heptose via an epimerization at carbon 6 of the heptose.</text>
</comment>
<comment type="catalytic activity">
    <reaction evidence="1">
        <text>ADP-D-glycero-beta-D-manno-heptose = ADP-L-glycero-beta-D-manno-heptose</text>
        <dbReference type="Rhea" id="RHEA:17577"/>
        <dbReference type="ChEBI" id="CHEBI:59967"/>
        <dbReference type="ChEBI" id="CHEBI:61506"/>
        <dbReference type="EC" id="5.1.3.20"/>
    </reaction>
</comment>
<comment type="cofactor">
    <cofactor evidence="1">
        <name>NADP(+)</name>
        <dbReference type="ChEBI" id="CHEBI:58349"/>
    </cofactor>
    <text evidence="1">Binds 1 NADP(+) per subunit.</text>
</comment>
<comment type="pathway">
    <text evidence="1">Nucleotide-sugar biosynthesis; ADP-L-glycero-beta-D-manno-heptose biosynthesis; ADP-L-glycero-beta-D-manno-heptose from D-glycero-beta-D-manno-heptose 7-phosphate: step 4/4.</text>
</comment>
<comment type="subunit">
    <text evidence="1">Homopentamer.</text>
</comment>
<comment type="domain">
    <text evidence="1">Contains a large N-terminal NADP-binding domain, and a smaller C-terminal substrate-binding domain.</text>
</comment>
<comment type="similarity">
    <text evidence="1">Belongs to the NAD(P)-dependent epimerase/dehydratase family. HldD subfamily.</text>
</comment>
<gene>
    <name evidence="1" type="primary">hldD</name>
    <name type="ordered locus">SeSA_A3909</name>
</gene>
<organism>
    <name type="scientific">Salmonella schwarzengrund (strain CVM19633)</name>
    <dbReference type="NCBI Taxonomy" id="439843"/>
    <lineage>
        <taxon>Bacteria</taxon>
        <taxon>Pseudomonadati</taxon>
        <taxon>Pseudomonadota</taxon>
        <taxon>Gammaproteobacteria</taxon>
        <taxon>Enterobacterales</taxon>
        <taxon>Enterobacteriaceae</taxon>
        <taxon>Salmonella</taxon>
    </lineage>
</organism>
<sequence length="310" mass="34849">MIIVTGGAGFIGSNIVKALNDKGITDILVVDNLKDGTKFVNLVDLNIADYMDKEDFLIQIMSGEELGDIEAIFHEGACSSTTEWDGKYMMDNNYQYSKELLHYCLEREIPFLYASSAATYGGRTSDFIESREYEKPLNVYGYSKFLFDEYVRQILPEANSQIVGFRYFNVYGPREGHKGSMASVAFHLNTQLNNGESPKLFEGSENFKRDFVYVGDVAAVNLWFLESGKSGIFNLGTGRAESFQAVADATLAYHKKGSIEYIPFPDKLKGRYQAFTQADLTNLRNAGYDKPFKTVAEGVTEYMAWLNRDA</sequence>
<reference key="1">
    <citation type="journal article" date="2011" name="J. Bacteriol.">
        <title>Comparative genomics of 28 Salmonella enterica isolates: evidence for CRISPR-mediated adaptive sublineage evolution.</title>
        <authorList>
            <person name="Fricke W.F."/>
            <person name="Mammel M.K."/>
            <person name="McDermott P.F."/>
            <person name="Tartera C."/>
            <person name="White D.G."/>
            <person name="Leclerc J.E."/>
            <person name="Ravel J."/>
            <person name="Cebula T.A."/>
        </authorList>
    </citation>
    <scope>NUCLEOTIDE SEQUENCE [LARGE SCALE GENOMIC DNA]</scope>
    <source>
        <strain>CVM19633</strain>
    </source>
</reference>
<evidence type="ECO:0000255" key="1">
    <source>
        <dbReference type="HAMAP-Rule" id="MF_01601"/>
    </source>
</evidence>
<keyword id="KW-0119">Carbohydrate metabolism</keyword>
<keyword id="KW-0413">Isomerase</keyword>
<keyword id="KW-0521">NADP</keyword>
<dbReference type="EC" id="5.1.3.20" evidence="1"/>
<dbReference type="EMBL" id="CP001127">
    <property type="protein sequence ID" value="ACF89513.1"/>
    <property type="molecule type" value="Genomic_DNA"/>
</dbReference>
<dbReference type="SMR" id="B4TZW1"/>
<dbReference type="KEGG" id="sew:SeSA_A3909"/>
<dbReference type="HOGENOM" id="CLU_007383_1_3_6"/>
<dbReference type="UniPathway" id="UPA00356">
    <property type="reaction ID" value="UER00440"/>
</dbReference>
<dbReference type="Proteomes" id="UP000001865">
    <property type="component" value="Chromosome"/>
</dbReference>
<dbReference type="GO" id="GO:0008712">
    <property type="term" value="F:ADP-glyceromanno-heptose 6-epimerase activity"/>
    <property type="evidence" value="ECO:0007669"/>
    <property type="project" value="UniProtKB-UniRule"/>
</dbReference>
<dbReference type="GO" id="GO:0050661">
    <property type="term" value="F:NADP binding"/>
    <property type="evidence" value="ECO:0007669"/>
    <property type="project" value="InterPro"/>
</dbReference>
<dbReference type="GO" id="GO:0097171">
    <property type="term" value="P:ADP-L-glycero-beta-D-manno-heptose biosynthetic process"/>
    <property type="evidence" value="ECO:0007669"/>
    <property type="project" value="UniProtKB-UniPathway"/>
</dbReference>
<dbReference type="GO" id="GO:0005975">
    <property type="term" value="P:carbohydrate metabolic process"/>
    <property type="evidence" value="ECO:0007669"/>
    <property type="project" value="UniProtKB-UniRule"/>
</dbReference>
<dbReference type="CDD" id="cd05248">
    <property type="entry name" value="ADP_GME_SDR_e"/>
    <property type="match status" value="1"/>
</dbReference>
<dbReference type="Gene3D" id="3.40.50.720">
    <property type="entry name" value="NAD(P)-binding Rossmann-like Domain"/>
    <property type="match status" value="1"/>
</dbReference>
<dbReference type="Gene3D" id="3.90.25.10">
    <property type="entry name" value="UDP-galactose 4-epimerase, domain 1"/>
    <property type="match status" value="1"/>
</dbReference>
<dbReference type="HAMAP" id="MF_01601">
    <property type="entry name" value="Heptose_epimerase"/>
    <property type="match status" value="1"/>
</dbReference>
<dbReference type="InterPro" id="IPR001509">
    <property type="entry name" value="Epimerase_deHydtase"/>
</dbReference>
<dbReference type="InterPro" id="IPR011912">
    <property type="entry name" value="Heptose_epim"/>
</dbReference>
<dbReference type="InterPro" id="IPR036291">
    <property type="entry name" value="NAD(P)-bd_dom_sf"/>
</dbReference>
<dbReference type="NCBIfam" id="TIGR02197">
    <property type="entry name" value="heptose_epim"/>
    <property type="match status" value="1"/>
</dbReference>
<dbReference type="NCBIfam" id="NF008360">
    <property type="entry name" value="PRK11150.1"/>
    <property type="match status" value="1"/>
</dbReference>
<dbReference type="PANTHER" id="PTHR43103:SF3">
    <property type="entry name" value="ADP-L-GLYCERO-D-MANNO-HEPTOSE-6-EPIMERASE"/>
    <property type="match status" value="1"/>
</dbReference>
<dbReference type="PANTHER" id="PTHR43103">
    <property type="entry name" value="NUCLEOSIDE-DIPHOSPHATE-SUGAR EPIMERASE"/>
    <property type="match status" value="1"/>
</dbReference>
<dbReference type="Pfam" id="PF01370">
    <property type="entry name" value="Epimerase"/>
    <property type="match status" value="1"/>
</dbReference>
<dbReference type="SUPFAM" id="SSF51735">
    <property type="entry name" value="NAD(P)-binding Rossmann-fold domains"/>
    <property type="match status" value="1"/>
</dbReference>